<keyword id="KW-0378">Hydrolase</keyword>
<keyword id="KW-0460">Magnesium</keyword>
<keyword id="KW-0479">Metal-binding</keyword>
<keyword id="KW-0546">Nucleotide metabolism</keyword>
<keyword id="KW-0547">Nucleotide-binding</keyword>
<keyword id="KW-1185">Reference proteome</keyword>
<comment type="function">
    <text evidence="1">Pyrophosphatase that catalyzes the hydrolysis of nucleoside triphosphates to their monophosphate derivatives, with a high preference for the non-canonical purine nucleotides XTP (xanthosine triphosphate), dITP (deoxyinosine triphosphate) and ITP. Seems to function as a house-cleaning enzyme that removes non-canonical purine nucleotides from the nucleotide pool, thus preventing their incorporation into DNA/RNA and avoiding chromosomal lesions.</text>
</comment>
<comment type="catalytic activity">
    <reaction evidence="1">
        <text>XTP + H2O = XMP + diphosphate + H(+)</text>
        <dbReference type="Rhea" id="RHEA:28610"/>
        <dbReference type="ChEBI" id="CHEBI:15377"/>
        <dbReference type="ChEBI" id="CHEBI:15378"/>
        <dbReference type="ChEBI" id="CHEBI:33019"/>
        <dbReference type="ChEBI" id="CHEBI:57464"/>
        <dbReference type="ChEBI" id="CHEBI:61314"/>
        <dbReference type="EC" id="3.6.1.66"/>
    </reaction>
</comment>
<comment type="catalytic activity">
    <reaction evidence="1">
        <text>dITP + H2O = dIMP + diphosphate + H(+)</text>
        <dbReference type="Rhea" id="RHEA:28342"/>
        <dbReference type="ChEBI" id="CHEBI:15377"/>
        <dbReference type="ChEBI" id="CHEBI:15378"/>
        <dbReference type="ChEBI" id="CHEBI:33019"/>
        <dbReference type="ChEBI" id="CHEBI:61194"/>
        <dbReference type="ChEBI" id="CHEBI:61382"/>
        <dbReference type="EC" id="3.6.1.66"/>
    </reaction>
</comment>
<comment type="catalytic activity">
    <reaction evidence="1">
        <text>ITP + H2O = IMP + diphosphate + H(+)</text>
        <dbReference type="Rhea" id="RHEA:29399"/>
        <dbReference type="ChEBI" id="CHEBI:15377"/>
        <dbReference type="ChEBI" id="CHEBI:15378"/>
        <dbReference type="ChEBI" id="CHEBI:33019"/>
        <dbReference type="ChEBI" id="CHEBI:58053"/>
        <dbReference type="ChEBI" id="CHEBI:61402"/>
        <dbReference type="EC" id="3.6.1.66"/>
    </reaction>
</comment>
<comment type="cofactor">
    <cofactor evidence="1">
        <name>Mg(2+)</name>
        <dbReference type="ChEBI" id="CHEBI:18420"/>
    </cofactor>
    <text evidence="1">Binds 1 Mg(2+) ion per subunit.</text>
</comment>
<comment type="subunit">
    <text evidence="1">Homodimer.</text>
</comment>
<comment type="similarity">
    <text evidence="1">Belongs to the HAM1 NTPase family.</text>
</comment>
<proteinExistence type="inferred from homology"/>
<feature type="chain" id="PRO_0000178264" description="dITP/XTP pyrophosphatase">
    <location>
        <begin position="1"/>
        <end position="199"/>
    </location>
</feature>
<feature type="active site" description="Proton acceptor" evidence="1">
    <location>
        <position position="68"/>
    </location>
</feature>
<feature type="binding site" evidence="1">
    <location>
        <begin position="8"/>
        <end position="13"/>
    </location>
    <ligand>
        <name>substrate</name>
    </ligand>
</feature>
<feature type="binding site" evidence="1">
    <location>
        <position position="40"/>
    </location>
    <ligand>
        <name>Mg(2+)</name>
        <dbReference type="ChEBI" id="CHEBI:18420"/>
    </ligand>
</feature>
<feature type="binding site" evidence="1">
    <location>
        <position position="68"/>
    </location>
    <ligand>
        <name>Mg(2+)</name>
        <dbReference type="ChEBI" id="CHEBI:18420"/>
    </ligand>
</feature>
<feature type="binding site" evidence="1">
    <location>
        <position position="69"/>
    </location>
    <ligand>
        <name>substrate</name>
    </ligand>
</feature>
<feature type="binding site" evidence="1">
    <location>
        <begin position="154"/>
        <end position="157"/>
    </location>
    <ligand>
        <name>substrate</name>
    </ligand>
</feature>
<feature type="binding site" evidence="1">
    <location>
        <position position="177"/>
    </location>
    <ligand>
        <name>substrate</name>
    </ligand>
</feature>
<feature type="binding site" evidence="1">
    <location>
        <begin position="182"/>
        <end position="183"/>
    </location>
    <ligand>
        <name>substrate</name>
    </ligand>
</feature>
<gene>
    <name type="ordered locus">WIGBR0780</name>
</gene>
<name>IXTPA_WIGBR</name>
<organism>
    <name type="scientific">Wigglesworthia glossinidia brevipalpis</name>
    <dbReference type="NCBI Taxonomy" id="36870"/>
    <lineage>
        <taxon>Bacteria</taxon>
        <taxon>Pseudomonadati</taxon>
        <taxon>Pseudomonadota</taxon>
        <taxon>Gammaproteobacteria</taxon>
        <taxon>Enterobacterales</taxon>
        <taxon>Erwiniaceae</taxon>
        <taxon>Wigglesworthia</taxon>
    </lineage>
</organism>
<dbReference type="EC" id="3.6.1.66" evidence="1"/>
<dbReference type="EMBL" id="BA000021">
    <property type="protein sequence ID" value="BAC24224.1"/>
    <property type="molecule type" value="Genomic_DNA"/>
</dbReference>
<dbReference type="SMR" id="Q8D3C3"/>
<dbReference type="STRING" id="36870.gene:10368556"/>
<dbReference type="KEGG" id="wbr:yggV"/>
<dbReference type="eggNOG" id="COG0127">
    <property type="taxonomic scope" value="Bacteria"/>
</dbReference>
<dbReference type="HOGENOM" id="CLU_082080_0_3_6"/>
<dbReference type="OrthoDB" id="9807456at2"/>
<dbReference type="Proteomes" id="UP000000562">
    <property type="component" value="Chromosome"/>
</dbReference>
<dbReference type="GO" id="GO:0005829">
    <property type="term" value="C:cytosol"/>
    <property type="evidence" value="ECO:0007669"/>
    <property type="project" value="TreeGrafter"/>
</dbReference>
<dbReference type="GO" id="GO:0035870">
    <property type="term" value="F:dITP diphosphatase activity"/>
    <property type="evidence" value="ECO:0007669"/>
    <property type="project" value="RHEA"/>
</dbReference>
<dbReference type="GO" id="GO:0036220">
    <property type="term" value="F:ITP diphosphatase activity"/>
    <property type="evidence" value="ECO:0007669"/>
    <property type="project" value="UniProtKB-EC"/>
</dbReference>
<dbReference type="GO" id="GO:0046872">
    <property type="term" value="F:metal ion binding"/>
    <property type="evidence" value="ECO:0007669"/>
    <property type="project" value="UniProtKB-KW"/>
</dbReference>
<dbReference type="GO" id="GO:0000166">
    <property type="term" value="F:nucleotide binding"/>
    <property type="evidence" value="ECO:0007669"/>
    <property type="project" value="UniProtKB-KW"/>
</dbReference>
<dbReference type="GO" id="GO:0017111">
    <property type="term" value="F:ribonucleoside triphosphate phosphatase activity"/>
    <property type="evidence" value="ECO:0007669"/>
    <property type="project" value="InterPro"/>
</dbReference>
<dbReference type="GO" id="GO:0036222">
    <property type="term" value="F:XTP diphosphatase activity"/>
    <property type="evidence" value="ECO:0007669"/>
    <property type="project" value="RHEA"/>
</dbReference>
<dbReference type="GO" id="GO:0009117">
    <property type="term" value="P:nucleotide metabolic process"/>
    <property type="evidence" value="ECO:0007669"/>
    <property type="project" value="UniProtKB-KW"/>
</dbReference>
<dbReference type="GO" id="GO:0009146">
    <property type="term" value="P:purine nucleoside triphosphate catabolic process"/>
    <property type="evidence" value="ECO:0007669"/>
    <property type="project" value="UniProtKB-UniRule"/>
</dbReference>
<dbReference type="CDD" id="cd00515">
    <property type="entry name" value="HAM1"/>
    <property type="match status" value="1"/>
</dbReference>
<dbReference type="FunFam" id="3.90.950.10:FF:000001">
    <property type="entry name" value="dITP/XTP pyrophosphatase"/>
    <property type="match status" value="1"/>
</dbReference>
<dbReference type="Gene3D" id="3.90.950.10">
    <property type="match status" value="1"/>
</dbReference>
<dbReference type="HAMAP" id="MF_01405">
    <property type="entry name" value="Non_canon_purine_NTPase"/>
    <property type="match status" value="1"/>
</dbReference>
<dbReference type="InterPro" id="IPR020922">
    <property type="entry name" value="dITP/XTP_pyrophosphatase"/>
</dbReference>
<dbReference type="InterPro" id="IPR029001">
    <property type="entry name" value="ITPase-like_fam"/>
</dbReference>
<dbReference type="InterPro" id="IPR002637">
    <property type="entry name" value="RdgB/HAM1"/>
</dbReference>
<dbReference type="NCBIfam" id="TIGR00042">
    <property type="entry name" value="RdgB/HAM1 family non-canonical purine NTP pyrophosphatase"/>
    <property type="match status" value="1"/>
</dbReference>
<dbReference type="PANTHER" id="PTHR11067:SF9">
    <property type="entry name" value="INOSINE TRIPHOSPHATE PYROPHOSPHATASE"/>
    <property type="match status" value="1"/>
</dbReference>
<dbReference type="PANTHER" id="PTHR11067">
    <property type="entry name" value="INOSINE TRIPHOSPHATE PYROPHOSPHATASE/HAM1 PROTEIN"/>
    <property type="match status" value="1"/>
</dbReference>
<dbReference type="Pfam" id="PF01725">
    <property type="entry name" value="Ham1p_like"/>
    <property type="match status" value="1"/>
</dbReference>
<dbReference type="SUPFAM" id="SSF52972">
    <property type="entry name" value="ITPase-like"/>
    <property type="match status" value="1"/>
</dbReference>
<sequence length="199" mass="22534">MKKIILATSNKNKIIEFKKILSELNINTISQKDLGICSIEENKSTFLENALIKARNASKYGFPALSDDSGLIIKTLNGEPGVYSSRFSGNQSNDIKNINMVLKKMLPFKKMDRQACMHCVLIYIRNPNDPIPIISSGTIYGKISNSISKINFGFGYDSIFFLPKKKKTISELTLEEKIKISHRGIAMKKMIKFLKNEKY</sequence>
<protein>
    <recommendedName>
        <fullName evidence="1">dITP/XTP pyrophosphatase</fullName>
        <ecNumber evidence="1">3.6.1.66</ecNumber>
    </recommendedName>
    <alternativeName>
        <fullName evidence="1">Non-canonical purine NTP pyrophosphatase</fullName>
    </alternativeName>
    <alternativeName>
        <fullName evidence="1">Non-standard purine NTP pyrophosphatase</fullName>
    </alternativeName>
    <alternativeName>
        <fullName evidence="1">Nucleoside-triphosphate diphosphatase</fullName>
    </alternativeName>
    <alternativeName>
        <fullName evidence="1">Nucleoside-triphosphate pyrophosphatase</fullName>
        <shortName evidence="1">NTPase</shortName>
    </alternativeName>
</protein>
<reference key="1">
    <citation type="journal article" date="2002" name="Nat. Genet.">
        <title>Genome sequence of the endocellular obligate symbiont of tsetse flies, Wigglesworthia glossinidia.</title>
        <authorList>
            <person name="Akman L."/>
            <person name="Yamashita A."/>
            <person name="Watanabe H."/>
            <person name="Oshima K."/>
            <person name="Shiba T."/>
            <person name="Hattori M."/>
            <person name="Aksoy S."/>
        </authorList>
    </citation>
    <scope>NUCLEOTIDE SEQUENCE [LARGE SCALE GENOMIC DNA]</scope>
</reference>
<accession>Q8D3C3</accession>
<evidence type="ECO:0000255" key="1">
    <source>
        <dbReference type="HAMAP-Rule" id="MF_01405"/>
    </source>
</evidence>